<feature type="chain" id="PRO_0000073555" description="Calglandulin">
    <location>
        <begin position="1"/>
        <end position="156"/>
    </location>
</feature>
<feature type="domain" description="EF-hand 1" evidence="2">
    <location>
        <begin position="8"/>
        <end position="43"/>
    </location>
</feature>
<feature type="domain" description="EF-hand 2" evidence="2">
    <location>
        <begin position="44"/>
        <end position="79"/>
    </location>
</feature>
<feature type="domain" description="EF-hand 3" evidence="2">
    <location>
        <begin position="82"/>
        <end position="117"/>
    </location>
</feature>
<feature type="domain" description="EF-hand 4" evidence="2">
    <location>
        <begin position="118"/>
        <end position="153"/>
    </location>
</feature>
<feature type="binding site" evidence="2">
    <location>
        <position position="131"/>
    </location>
    <ligand>
        <name>Ca(2+)</name>
        <dbReference type="ChEBI" id="CHEBI:29108"/>
    </ligand>
</feature>
<feature type="binding site" evidence="2">
    <location>
        <position position="133"/>
    </location>
    <ligand>
        <name>Ca(2+)</name>
        <dbReference type="ChEBI" id="CHEBI:29108"/>
    </ligand>
</feature>
<feature type="binding site" evidence="2">
    <location>
        <position position="135"/>
    </location>
    <ligand>
        <name>Ca(2+)</name>
        <dbReference type="ChEBI" id="CHEBI:29108"/>
    </ligand>
</feature>
<feature type="binding site" evidence="2">
    <location>
        <position position="137"/>
    </location>
    <ligand>
        <name>Ca(2+)</name>
        <dbReference type="ChEBI" id="CHEBI:29108"/>
    </ligand>
</feature>
<feature type="binding site" evidence="2">
    <location>
        <position position="142"/>
    </location>
    <ligand>
        <name>Ca(2+)</name>
        <dbReference type="ChEBI" id="CHEBI:29108"/>
    </ligand>
</feature>
<comment type="function">
    <text evidence="1">May be involved in the cellular control mechanism of the secretion of toxins from the gland into the venom.</text>
</comment>
<comment type="subcellular location">
    <subcellularLocation>
        <location evidence="3">Cytoplasm</location>
    </subcellularLocation>
    <text evidence="1">Not found in venom.</text>
</comment>
<comment type="tissue specificity">
    <text>Expressed by the venom gland.</text>
</comment>
<comment type="similarity">
    <text evidence="3">Belongs to the calmodulin family. Calglandulin subfamily.</text>
</comment>
<name>CALGL_PSEPO</name>
<organism>
    <name type="scientific">Pseudechis porphyriacus</name>
    <name type="common">Red-bellied black snake</name>
    <dbReference type="NCBI Taxonomy" id="8671"/>
    <lineage>
        <taxon>Eukaryota</taxon>
        <taxon>Metazoa</taxon>
        <taxon>Chordata</taxon>
        <taxon>Craniata</taxon>
        <taxon>Vertebrata</taxon>
        <taxon>Euteleostomi</taxon>
        <taxon>Lepidosauria</taxon>
        <taxon>Squamata</taxon>
        <taxon>Bifurcata</taxon>
        <taxon>Unidentata</taxon>
        <taxon>Episquamata</taxon>
        <taxon>Toxicofera</taxon>
        <taxon>Serpentes</taxon>
        <taxon>Colubroidea</taxon>
        <taxon>Elapidae</taxon>
        <taxon>Hydrophiinae</taxon>
        <taxon>Pseudechis</taxon>
    </lineage>
</organism>
<accession>Q3SB08</accession>
<protein>
    <recommendedName>
        <fullName>Calglandulin</fullName>
    </recommendedName>
</protein>
<keyword id="KW-0106">Calcium</keyword>
<keyword id="KW-0963">Cytoplasm</keyword>
<keyword id="KW-0479">Metal-binding</keyword>
<keyword id="KW-0677">Repeat</keyword>
<reference key="1">
    <citation type="journal article" date="2005" name="Cell. Mol. Life Sci.">
        <title>Identification and analysis of venom gland-specific genes from the coastal taipan (Oxyuranus scutellatus) and related species.</title>
        <authorList>
            <person name="St Pierre L."/>
            <person name="Woods R."/>
            <person name="Earl S.T.H."/>
            <person name="Masci P.P."/>
            <person name="Lavin M.F."/>
        </authorList>
    </citation>
    <scope>NUCLEOTIDE SEQUENCE [MRNA]</scope>
    <source>
        <tissue>Venom gland</tissue>
    </source>
</reference>
<sequence>MAATLTPEQITEYKGIFEMFDEEGNGLVKTDDLESLMSLIGINPTKRDLANMAKDVDKDKKGTFNCDGFLVLMGIYHEKSKNQDEELRAAFKVFDKEHKGYIEWDTLKYVLMNAGEPLNEHEAELMMKEADKDGDGTIDYEEFVAMMTGESFKLTQ</sequence>
<evidence type="ECO:0000250" key="1"/>
<evidence type="ECO:0000255" key="2">
    <source>
        <dbReference type="PROSITE-ProRule" id="PRU00448"/>
    </source>
</evidence>
<evidence type="ECO:0000305" key="3"/>
<proteinExistence type="evidence at transcript level"/>
<dbReference type="EMBL" id="DQ084034">
    <property type="protein sequence ID" value="AAZ38979.1"/>
    <property type="molecule type" value="mRNA"/>
</dbReference>
<dbReference type="SMR" id="Q3SB08"/>
<dbReference type="GO" id="GO:0005737">
    <property type="term" value="C:cytoplasm"/>
    <property type="evidence" value="ECO:0007669"/>
    <property type="project" value="UniProtKB-SubCell"/>
</dbReference>
<dbReference type="GO" id="GO:0016460">
    <property type="term" value="C:myosin II complex"/>
    <property type="evidence" value="ECO:0007669"/>
    <property type="project" value="TreeGrafter"/>
</dbReference>
<dbReference type="GO" id="GO:0005509">
    <property type="term" value="F:calcium ion binding"/>
    <property type="evidence" value="ECO:0007669"/>
    <property type="project" value="InterPro"/>
</dbReference>
<dbReference type="CDD" id="cd00051">
    <property type="entry name" value="EFh"/>
    <property type="match status" value="1"/>
</dbReference>
<dbReference type="FunFam" id="1.10.238.10:FF:000163">
    <property type="entry name" value="Calmodulin like 6"/>
    <property type="match status" value="1"/>
</dbReference>
<dbReference type="Gene3D" id="1.10.238.10">
    <property type="entry name" value="EF-hand"/>
    <property type="match status" value="2"/>
</dbReference>
<dbReference type="InterPro" id="IPR050230">
    <property type="entry name" value="CALM/Myosin/TropC-like"/>
</dbReference>
<dbReference type="InterPro" id="IPR011992">
    <property type="entry name" value="EF-hand-dom_pair"/>
</dbReference>
<dbReference type="InterPro" id="IPR018247">
    <property type="entry name" value="EF_Hand_1_Ca_BS"/>
</dbReference>
<dbReference type="InterPro" id="IPR002048">
    <property type="entry name" value="EF_hand_dom"/>
</dbReference>
<dbReference type="PANTHER" id="PTHR23048:SF56">
    <property type="entry name" value="CALMODULIN 2"/>
    <property type="match status" value="1"/>
</dbReference>
<dbReference type="PANTHER" id="PTHR23048">
    <property type="entry name" value="MYOSIN LIGHT CHAIN 1, 3"/>
    <property type="match status" value="1"/>
</dbReference>
<dbReference type="Pfam" id="PF13499">
    <property type="entry name" value="EF-hand_7"/>
    <property type="match status" value="1"/>
</dbReference>
<dbReference type="Pfam" id="PF13833">
    <property type="entry name" value="EF-hand_8"/>
    <property type="match status" value="1"/>
</dbReference>
<dbReference type="SMART" id="SM00054">
    <property type="entry name" value="EFh"/>
    <property type="match status" value="4"/>
</dbReference>
<dbReference type="SUPFAM" id="SSF47473">
    <property type="entry name" value="EF-hand"/>
    <property type="match status" value="1"/>
</dbReference>
<dbReference type="PROSITE" id="PS00018">
    <property type="entry name" value="EF_HAND_1"/>
    <property type="match status" value="1"/>
</dbReference>
<dbReference type="PROSITE" id="PS50222">
    <property type="entry name" value="EF_HAND_2"/>
    <property type="match status" value="4"/>
</dbReference>